<sequence length="379" mass="42644">MTNMRKTHPLMKIINNSFIDLPAPSNISSWWNFGSLLGICLVLQIITGMFLAMHYTSDTMTAFSSVTHICRDVNYGWLIRYLHANGASMFFICLFMHVGRGLYYGSYMFTETWNIGVLLLFAVMATAFMGYVLPWGQMSFWGATVITNLLSAIPYIGTDLVEWIWGGFSVDKATLTRFFAFHFILPFIIAALAGVHLLFLHETGSNNPSGLSSDTDKIPFHPYYTIKDILGALILILIISLLVLFSPDLLGDPDNYTPANPLNTPPHIKPEWYFLFAYAILRSIPNKLGGVLALVLSILVLALLPLLHTSKQRSMMFRPLSQCLFWLLAADLLTLTWIGGQPVEHPFIIIGQVASVLYFFLILIIMPLASIMENNMLKW</sequence>
<name>CYB_GALPY</name>
<keyword id="KW-0249">Electron transport</keyword>
<keyword id="KW-0349">Heme</keyword>
<keyword id="KW-0408">Iron</keyword>
<keyword id="KW-0472">Membrane</keyword>
<keyword id="KW-0479">Metal-binding</keyword>
<keyword id="KW-0496">Mitochondrion</keyword>
<keyword id="KW-0999">Mitochondrion inner membrane</keyword>
<keyword id="KW-0679">Respiratory chain</keyword>
<keyword id="KW-0812">Transmembrane</keyword>
<keyword id="KW-1133">Transmembrane helix</keyword>
<keyword id="KW-0813">Transport</keyword>
<keyword id="KW-0830">Ubiquinone</keyword>
<gene>
    <name type="primary">MT-CYB</name>
    <name type="synonym">COB</name>
    <name type="synonym">CYTB</name>
    <name type="synonym">MTCYB</name>
</gene>
<organism>
    <name type="scientific">Galemys pyrenaicus</name>
    <name type="common">Iberian desman</name>
    <name type="synonym">Pyrenean desman</name>
    <dbReference type="NCBI Taxonomy" id="202257"/>
    <lineage>
        <taxon>Eukaryota</taxon>
        <taxon>Metazoa</taxon>
        <taxon>Chordata</taxon>
        <taxon>Craniata</taxon>
        <taxon>Vertebrata</taxon>
        <taxon>Euteleostomi</taxon>
        <taxon>Mammalia</taxon>
        <taxon>Eutheria</taxon>
        <taxon>Laurasiatheria</taxon>
        <taxon>Eulipotyphla</taxon>
        <taxon>Talpidae</taxon>
        <taxon>Galemys</taxon>
    </lineage>
</organism>
<proteinExistence type="inferred from homology"/>
<evidence type="ECO:0000250" key="1"/>
<evidence type="ECO:0000250" key="2">
    <source>
        <dbReference type="UniProtKB" id="P00157"/>
    </source>
</evidence>
<evidence type="ECO:0000255" key="3">
    <source>
        <dbReference type="PROSITE-ProRule" id="PRU00967"/>
    </source>
</evidence>
<evidence type="ECO:0000255" key="4">
    <source>
        <dbReference type="PROSITE-ProRule" id="PRU00968"/>
    </source>
</evidence>
<geneLocation type="mitochondrion"/>
<comment type="function">
    <text evidence="2">Component of the ubiquinol-cytochrome c reductase complex (complex III or cytochrome b-c1 complex) that is part of the mitochondrial respiratory chain. The b-c1 complex mediates electron transfer from ubiquinol to cytochrome c. Contributes to the generation of a proton gradient across the mitochondrial membrane that is then used for ATP synthesis.</text>
</comment>
<comment type="cofactor">
    <cofactor evidence="2">
        <name>heme b</name>
        <dbReference type="ChEBI" id="CHEBI:60344"/>
    </cofactor>
    <text evidence="2">Binds 2 heme b groups non-covalently.</text>
</comment>
<comment type="subunit">
    <text evidence="2">The cytochrome bc1 complex contains 11 subunits: 3 respiratory subunits (MT-CYB, CYC1 and UQCRFS1), 2 core proteins (UQCRC1 and UQCRC2) and 6 low-molecular weight proteins (UQCRH/QCR6, UQCRB/QCR7, UQCRQ/QCR8, UQCR10/QCR9, UQCR11/QCR10 and a cleavage product of UQCRFS1). This cytochrome bc1 complex then forms a dimer.</text>
</comment>
<comment type="subcellular location">
    <subcellularLocation>
        <location evidence="2">Mitochondrion inner membrane</location>
        <topology evidence="2">Multi-pass membrane protein</topology>
    </subcellularLocation>
</comment>
<comment type="miscellaneous">
    <text evidence="1">Heme 1 (or BL or b562) is low-potential and absorbs at about 562 nm, and heme 2 (or BH or b566) is high-potential and absorbs at about 566 nm.</text>
</comment>
<comment type="similarity">
    <text evidence="3 4">Belongs to the cytochrome b family.</text>
</comment>
<comment type="caution">
    <text evidence="2">The full-length protein contains only eight transmembrane helices, not nine as predicted by bioinformatics tools.</text>
</comment>
<reference key="1">
    <citation type="journal article" date="2006" name="Gene">
        <title>On the phylogenetic position of a rare Iberian endemic mammal, the Pyrenean desman (Galemys pyrenaicus).</title>
        <authorList>
            <person name="Cabria M.T."/>
            <person name="Rubines J."/>
            <person name="Gomez-Moliner B."/>
            <person name="Zardoya R."/>
        </authorList>
    </citation>
    <scope>NUCLEOTIDE SEQUENCE [GENOMIC DNA]</scope>
</reference>
<accession>Q1EG05</accession>
<feature type="chain" id="PRO_0000257900" description="Cytochrome b">
    <location>
        <begin position="1"/>
        <end position="379"/>
    </location>
</feature>
<feature type="transmembrane region" description="Helical" evidence="2">
    <location>
        <begin position="33"/>
        <end position="53"/>
    </location>
</feature>
<feature type="transmembrane region" description="Helical" evidence="2">
    <location>
        <begin position="77"/>
        <end position="98"/>
    </location>
</feature>
<feature type="transmembrane region" description="Helical" evidence="2">
    <location>
        <begin position="113"/>
        <end position="133"/>
    </location>
</feature>
<feature type="transmembrane region" description="Helical" evidence="2">
    <location>
        <begin position="178"/>
        <end position="198"/>
    </location>
</feature>
<feature type="transmembrane region" description="Helical" evidence="2">
    <location>
        <begin position="226"/>
        <end position="246"/>
    </location>
</feature>
<feature type="transmembrane region" description="Helical" evidence="2">
    <location>
        <begin position="288"/>
        <end position="308"/>
    </location>
</feature>
<feature type="transmembrane region" description="Helical" evidence="2">
    <location>
        <begin position="320"/>
        <end position="340"/>
    </location>
</feature>
<feature type="transmembrane region" description="Helical" evidence="2">
    <location>
        <begin position="347"/>
        <end position="367"/>
    </location>
</feature>
<feature type="binding site" description="axial binding residue" evidence="2">
    <location>
        <position position="83"/>
    </location>
    <ligand>
        <name>heme b</name>
        <dbReference type="ChEBI" id="CHEBI:60344"/>
        <label>b562</label>
    </ligand>
    <ligandPart>
        <name>Fe</name>
        <dbReference type="ChEBI" id="CHEBI:18248"/>
    </ligandPart>
</feature>
<feature type="binding site" description="axial binding residue" evidence="2">
    <location>
        <position position="97"/>
    </location>
    <ligand>
        <name>heme b</name>
        <dbReference type="ChEBI" id="CHEBI:60344"/>
        <label>b566</label>
    </ligand>
    <ligandPart>
        <name>Fe</name>
        <dbReference type="ChEBI" id="CHEBI:18248"/>
    </ligandPart>
</feature>
<feature type="binding site" description="axial binding residue" evidence="2">
    <location>
        <position position="182"/>
    </location>
    <ligand>
        <name>heme b</name>
        <dbReference type="ChEBI" id="CHEBI:60344"/>
        <label>b562</label>
    </ligand>
    <ligandPart>
        <name>Fe</name>
        <dbReference type="ChEBI" id="CHEBI:18248"/>
    </ligandPart>
</feature>
<feature type="binding site" description="axial binding residue" evidence="2">
    <location>
        <position position="196"/>
    </location>
    <ligand>
        <name>heme b</name>
        <dbReference type="ChEBI" id="CHEBI:60344"/>
        <label>b566</label>
    </ligand>
    <ligandPart>
        <name>Fe</name>
        <dbReference type="ChEBI" id="CHEBI:18248"/>
    </ligandPart>
</feature>
<feature type="binding site" evidence="2">
    <location>
        <position position="201"/>
    </location>
    <ligand>
        <name>a ubiquinone</name>
        <dbReference type="ChEBI" id="CHEBI:16389"/>
    </ligand>
</feature>
<dbReference type="EMBL" id="AY833419">
    <property type="protein sequence ID" value="AAW23988.1"/>
    <property type="molecule type" value="Genomic_DNA"/>
</dbReference>
<dbReference type="RefSeq" id="YP_654274.1">
    <property type="nucleotide sequence ID" value="NC_008156.1"/>
</dbReference>
<dbReference type="SMR" id="Q1EG05"/>
<dbReference type="GeneID" id="4126963"/>
<dbReference type="CTD" id="4519"/>
<dbReference type="GO" id="GO:0005743">
    <property type="term" value="C:mitochondrial inner membrane"/>
    <property type="evidence" value="ECO:0007669"/>
    <property type="project" value="UniProtKB-SubCell"/>
</dbReference>
<dbReference type="GO" id="GO:0045275">
    <property type="term" value="C:respiratory chain complex III"/>
    <property type="evidence" value="ECO:0007669"/>
    <property type="project" value="InterPro"/>
</dbReference>
<dbReference type="GO" id="GO:0046872">
    <property type="term" value="F:metal ion binding"/>
    <property type="evidence" value="ECO:0007669"/>
    <property type="project" value="UniProtKB-KW"/>
</dbReference>
<dbReference type="GO" id="GO:0008121">
    <property type="term" value="F:ubiquinol-cytochrome-c reductase activity"/>
    <property type="evidence" value="ECO:0007669"/>
    <property type="project" value="InterPro"/>
</dbReference>
<dbReference type="GO" id="GO:0006122">
    <property type="term" value="P:mitochondrial electron transport, ubiquinol to cytochrome c"/>
    <property type="evidence" value="ECO:0007669"/>
    <property type="project" value="TreeGrafter"/>
</dbReference>
<dbReference type="CDD" id="cd00290">
    <property type="entry name" value="cytochrome_b_C"/>
    <property type="match status" value="1"/>
</dbReference>
<dbReference type="CDD" id="cd00284">
    <property type="entry name" value="Cytochrome_b_N"/>
    <property type="match status" value="1"/>
</dbReference>
<dbReference type="FunFam" id="1.20.810.10:FF:000002">
    <property type="entry name" value="Cytochrome b"/>
    <property type="match status" value="1"/>
</dbReference>
<dbReference type="Gene3D" id="1.20.810.10">
    <property type="entry name" value="Cytochrome Bc1 Complex, Chain C"/>
    <property type="match status" value="1"/>
</dbReference>
<dbReference type="InterPro" id="IPR005798">
    <property type="entry name" value="Cyt_b/b6_C"/>
</dbReference>
<dbReference type="InterPro" id="IPR036150">
    <property type="entry name" value="Cyt_b/b6_C_sf"/>
</dbReference>
<dbReference type="InterPro" id="IPR005797">
    <property type="entry name" value="Cyt_b/b6_N"/>
</dbReference>
<dbReference type="InterPro" id="IPR027387">
    <property type="entry name" value="Cytb/b6-like_sf"/>
</dbReference>
<dbReference type="InterPro" id="IPR030689">
    <property type="entry name" value="Cytochrome_b"/>
</dbReference>
<dbReference type="InterPro" id="IPR048260">
    <property type="entry name" value="Cytochrome_b_C_euk/bac"/>
</dbReference>
<dbReference type="InterPro" id="IPR048259">
    <property type="entry name" value="Cytochrome_b_N_euk/bac"/>
</dbReference>
<dbReference type="InterPro" id="IPR016174">
    <property type="entry name" value="Di-haem_cyt_TM"/>
</dbReference>
<dbReference type="PANTHER" id="PTHR19271">
    <property type="entry name" value="CYTOCHROME B"/>
    <property type="match status" value="1"/>
</dbReference>
<dbReference type="PANTHER" id="PTHR19271:SF16">
    <property type="entry name" value="CYTOCHROME B"/>
    <property type="match status" value="1"/>
</dbReference>
<dbReference type="Pfam" id="PF00032">
    <property type="entry name" value="Cytochrom_B_C"/>
    <property type="match status" value="1"/>
</dbReference>
<dbReference type="Pfam" id="PF00033">
    <property type="entry name" value="Cytochrome_B"/>
    <property type="match status" value="1"/>
</dbReference>
<dbReference type="PIRSF" id="PIRSF038885">
    <property type="entry name" value="COB"/>
    <property type="match status" value="1"/>
</dbReference>
<dbReference type="SUPFAM" id="SSF81648">
    <property type="entry name" value="a domain/subunit of cytochrome bc1 complex (Ubiquinol-cytochrome c reductase)"/>
    <property type="match status" value="1"/>
</dbReference>
<dbReference type="SUPFAM" id="SSF81342">
    <property type="entry name" value="Transmembrane di-heme cytochromes"/>
    <property type="match status" value="1"/>
</dbReference>
<dbReference type="PROSITE" id="PS51003">
    <property type="entry name" value="CYTB_CTER"/>
    <property type="match status" value="1"/>
</dbReference>
<dbReference type="PROSITE" id="PS51002">
    <property type="entry name" value="CYTB_NTER"/>
    <property type="match status" value="1"/>
</dbReference>
<protein>
    <recommendedName>
        <fullName>Cytochrome b</fullName>
    </recommendedName>
    <alternativeName>
        <fullName>Complex III subunit 3</fullName>
    </alternativeName>
    <alternativeName>
        <fullName>Complex III subunit III</fullName>
    </alternativeName>
    <alternativeName>
        <fullName>Cytochrome b-c1 complex subunit 3</fullName>
    </alternativeName>
    <alternativeName>
        <fullName>Ubiquinol-cytochrome-c reductase complex cytochrome b subunit</fullName>
    </alternativeName>
</protein>